<accession>C0RG03</accession>
<dbReference type="EMBL" id="CP001488">
    <property type="protein sequence ID" value="ACO01825.1"/>
    <property type="molecule type" value="Genomic_DNA"/>
</dbReference>
<dbReference type="RefSeq" id="WP_002965184.1">
    <property type="nucleotide sequence ID" value="NC_012441.1"/>
</dbReference>
<dbReference type="SMR" id="C0RG03"/>
<dbReference type="GeneID" id="93017574"/>
<dbReference type="KEGG" id="bmi:BMEA_A2179"/>
<dbReference type="HOGENOM" id="CLU_169643_2_1_5"/>
<dbReference type="Proteomes" id="UP000001748">
    <property type="component" value="Chromosome I"/>
</dbReference>
<dbReference type="GO" id="GO:0022625">
    <property type="term" value="C:cytosolic large ribosomal subunit"/>
    <property type="evidence" value="ECO:0007669"/>
    <property type="project" value="TreeGrafter"/>
</dbReference>
<dbReference type="GO" id="GO:0003735">
    <property type="term" value="F:structural constituent of ribosome"/>
    <property type="evidence" value="ECO:0007669"/>
    <property type="project" value="InterPro"/>
</dbReference>
<dbReference type="GO" id="GO:0006412">
    <property type="term" value="P:translation"/>
    <property type="evidence" value="ECO:0007669"/>
    <property type="project" value="UniProtKB-UniRule"/>
</dbReference>
<dbReference type="FunFam" id="4.10.410.60:FF:000001">
    <property type="entry name" value="50S ribosomal protein L35"/>
    <property type="match status" value="1"/>
</dbReference>
<dbReference type="Gene3D" id="4.10.410.60">
    <property type="match status" value="1"/>
</dbReference>
<dbReference type="HAMAP" id="MF_00514">
    <property type="entry name" value="Ribosomal_bL35"/>
    <property type="match status" value="1"/>
</dbReference>
<dbReference type="InterPro" id="IPR001706">
    <property type="entry name" value="Ribosomal_bL35"/>
</dbReference>
<dbReference type="InterPro" id="IPR021137">
    <property type="entry name" value="Ribosomal_bL35-like"/>
</dbReference>
<dbReference type="InterPro" id="IPR018265">
    <property type="entry name" value="Ribosomal_bL35_CS"/>
</dbReference>
<dbReference type="InterPro" id="IPR037229">
    <property type="entry name" value="Ribosomal_bL35_sf"/>
</dbReference>
<dbReference type="NCBIfam" id="TIGR00001">
    <property type="entry name" value="rpmI_bact"/>
    <property type="match status" value="1"/>
</dbReference>
<dbReference type="PANTHER" id="PTHR33343">
    <property type="entry name" value="54S RIBOSOMAL PROTEIN BL35M"/>
    <property type="match status" value="1"/>
</dbReference>
<dbReference type="PANTHER" id="PTHR33343:SF1">
    <property type="entry name" value="LARGE RIBOSOMAL SUBUNIT PROTEIN BL35M"/>
    <property type="match status" value="1"/>
</dbReference>
<dbReference type="Pfam" id="PF01632">
    <property type="entry name" value="Ribosomal_L35p"/>
    <property type="match status" value="1"/>
</dbReference>
<dbReference type="PRINTS" id="PR00064">
    <property type="entry name" value="RIBOSOMALL35"/>
</dbReference>
<dbReference type="SUPFAM" id="SSF143034">
    <property type="entry name" value="L35p-like"/>
    <property type="match status" value="1"/>
</dbReference>
<dbReference type="PROSITE" id="PS00936">
    <property type="entry name" value="RIBOSOMAL_L35"/>
    <property type="match status" value="1"/>
</dbReference>
<evidence type="ECO:0000255" key="1">
    <source>
        <dbReference type="HAMAP-Rule" id="MF_00514"/>
    </source>
</evidence>
<evidence type="ECO:0000305" key="2"/>
<protein>
    <recommendedName>
        <fullName evidence="1">Large ribosomal subunit protein bL35</fullName>
    </recommendedName>
    <alternativeName>
        <fullName evidence="2">50S ribosomal protein L35</fullName>
    </alternativeName>
</protein>
<gene>
    <name evidence="1" type="primary">rpmI</name>
    <name type="ordered locus">BMEA_A2179</name>
</gene>
<feature type="chain" id="PRO_1000146126" description="Large ribosomal subunit protein bL35">
    <location>
        <begin position="1"/>
        <end position="66"/>
    </location>
</feature>
<comment type="similarity">
    <text evidence="1">Belongs to the bacterial ribosomal protein bL35 family.</text>
</comment>
<keyword id="KW-0687">Ribonucleoprotein</keyword>
<keyword id="KW-0689">Ribosomal protein</keyword>
<name>RL35_BRUMB</name>
<sequence>MPKMKTKSAAKKRFKITGTGKVKAAAAGKRHGMIKRSNKFIRDARGTMVLADADAKIVKQFLPNGL</sequence>
<organism>
    <name type="scientific">Brucella melitensis biotype 2 (strain ATCC 23457)</name>
    <dbReference type="NCBI Taxonomy" id="546272"/>
    <lineage>
        <taxon>Bacteria</taxon>
        <taxon>Pseudomonadati</taxon>
        <taxon>Pseudomonadota</taxon>
        <taxon>Alphaproteobacteria</taxon>
        <taxon>Hyphomicrobiales</taxon>
        <taxon>Brucellaceae</taxon>
        <taxon>Brucella/Ochrobactrum group</taxon>
        <taxon>Brucella</taxon>
    </lineage>
</organism>
<proteinExistence type="inferred from homology"/>
<reference key="1">
    <citation type="submission" date="2009-03" db="EMBL/GenBank/DDBJ databases">
        <title>Brucella melitensis ATCC 23457 whole genome shotgun sequencing project.</title>
        <authorList>
            <person name="Setubal J.C."/>
            <person name="Boyle S."/>
            <person name="Crasta O.R."/>
            <person name="Gillespie J.J."/>
            <person name="Kenyon R.W."/>
            <person name="Lu J."/>
            <person name="Mane S."/>
            <person name="Nagrani S."/>
            <person name="Shallom J.M."/>
            <person name="Shallom S."/>
            <person name="Shukla M."/>
            <person name="Snyder E.E."/>
            <person name="Sobral B.W."/>
            <person name="Wattam A.R."/>
            <person name="Will R."/>
            <person name="Williams K."/>
            <person name="Yoo H."/>
            <person name="Munk C."/>
            <person name="Tapia R."/>
            <person name="Han C."/>
            <person name="Detter J.C."/>
            <person name="Bruce D."/>
            <person name="Brettin T.S."/>
        </authorList>
    </citation>
    <scope>NUCLEOTIDE SEQUENCE [LARGE SCALE GENOMIC DNA]</scope>
    <source>
        <strain>ATCC 23457</strain>
    </source>
</reference>